<feature type="chain" id="PRO_0000257095" description="Probable transcriptional regulatory protein Plut_1643">
    <location>
        <begin position="1"/>
        <end position="250"/>
    </location>
</feature>
<keyword id="KW-0963">Cytoplasm</keyword>
<keyword id="KW-0238">DNA-binding</keyword>
<keyword id="KW-1185">Reference proteome</keyword>
<keyword id="KW-0804">Transcription</keyword>
<keyword id="KW-0805">Transcription regulation</keyword>
<comment type="subcellular location">
    <subcellularLocation>
        <location evidence="1">Cytoplasm</location>
    </subcellularLocation>
</comment>
<comment type="similarity">
    <text evidence="1">Belongs to the TACO1 family.</text>
</comment>
<proteinExistence type="inferred from homology"/>
<dbReference type="EMBL" id="CP000096">
    <property type="protein sequence ID" value="ABB24497.1"/>
    <property type="molecule type" value="Genomic_DNA"/>
</dbReference>
<dbReference type="RefSeq" id="WP_011358369.1">
    <property type="nucleotide sequence ID" value="NC_007512.1"/>
</dbReference>
<dbReference type="SMR" id="Q3B2D4"/>
<dbReference type="STRING" id="319225.Plut_1643"/>
<dbReference type="KEGG" id="plt:Plut_1643"/>
<dbReference type="eggNOG" id="COG0217">
    <property type="taxonomic scope" value="Bacteria"/>
</dbReference>
<dbReference type="HOGENOM" id="CLU_062974_2_2_10"/>
<dbReference type="OrthoDB" id="9781053at2"/>
<dbReference type="Proteomes" id="UP000002709">
    <property type="component" value="Chromosome"/>
</dbReference>
<dbReference type="GO" id="GO:0005829">
    <property type="term" value="C:cytosol"/>
    <property type="evidence" value="ECO:0007669"/>
    <property type="project" value="TreeGrafter"/>
</dbReference>
<dbReference type="GO" id="GO:0003677">
    <property type="term" value="F:DNA binding"/>
    <property type="evidence" value="ECO:0007669"/>
    <property type="project" value="UniProtKB-UniRule"/>
</dbReference>
<dbReference type="GO" id="GO:0006355">
    <property type="term" value="P:regulation of DNA-templated transcription"/>
    <property type="evidence" value="ECO:0007669"/>
    <property type="project" value="UniProtKB-UniRule"/>
</dbReference>
<dbReference type="FunFam" id="1.10.10.200:FF:000002">
    <property type="entry name" value="Probable transcriptional regulatory protein CLM62_37755"/>
    <property type="match status" value="1"/>
</dbReference>
<dbReference type="Gene3D" id="1.10.10.200">
    <property type="match status" value="1"/>
</dbReference>
<dbReference type="Gene3D" id="3.30.70.980">
    <property type="match status" value="2"/>
</dbReference>
<dbReference type="HAMAP" id="MF_00693">
    <property type="entry name" value="Transcrip_reg_TACO1"/>
    <property type="match status" value="1"/>
</dbReference>
<dbReference type="InterPro" id="IPR017856">
    <property type="entry name" value="Integrase-like_N"/>
</dbReference>
<dbReference type="InterPro" id="IPR048300">
    <property type="entry name" value="TACO1_YebC-like_2nd/3rd_dom"/>
</dbReference>
<dbReference type="InterPro" id="IPR049083">
    <property type="entry name" value="TACO1_YebC_N"/>
</dbReference>
<dbReference type="InterPro" id="IPR002876">
    <property type="entry name" value="Transcrip_reg_TACO1-like"/>
</dbReference>
<dbReference type="InterPro" id="IPR026564">
    <property type="entry name" value="Transcrip_reg_TACO1-like_dom3"/>
</dbReference>
<dbReference type="InterPro" id="IPR029072">
    <property type="entry name" value="YebC-like"/>
</dbReference>
<dbReference type="NCBIfam" id="NF001030">
    <property type="entry name" value="PRK00110.1"/>
    <property type="match status" value="1"/>
</dbReference>
<dbReference type="NCBIfam" id="NF009044">
    <property type="entry name" value="PRK12378.1"/>
    <property type="match status" value="1"/>
</dbReference>
<dbReference type="NCBIfam" id="TIGR01033">
    <property type="entry name" value="YebC/PmpR family DNA-binding transcriptional regulator"/>
    <property type="match status" value="1"/>
</dbReference>
<dbReference type="PANTHER" id="PTHR12532:SF6">
    <property type="entry name" value="TRANSCRIPTIONAL REGULATORY PROTEIN YEBC-RELATED"/>
    <property type="match status" value="1"/>
</dbReference>
<dbReference type="PANTHER" id="PTHR12532">
    <property type="entry name" value="TRANSLATIONAL ACTIVATOR OF CYTOCHROME C OXIDASE 1"/>
    <property type="match status" value="1"/>
</dbReference>
<dbReference type="Pfam" id="PF20772">
    <property type="entry name" value="TACO1_YebC_N"/>
    <property type="match status" value="1"/>
</dbReference>
<dbReference type="Pfam" id="PF01709">
    <property type="entry name" value="Transcrip_reg"/>
    <property type="match status" value="1"/>
</dbReference>
<dbReference type="SUPFAM" id="SSF75625">
    <property type="entry name" value="YebC-like"/>
    <property type="match status" value="1"/>
</dbReference>
<reference key="1">
    <citation type="submission" date="2005-08" db="EMBL/GenBank/DDBJ databases">
        <title>Complete sequence of Pelodictyon luteolum DSM 273.</title>
        <authorList>
            <consortium name="US DOE Joint Genome Institute"/>
            <person name="Copeland A."/>
            <person name="Lucas S."/>
            <person name="Lapidus A."/>
            <person name="Barry K."/>
            <person name="Detter J.C."/>
            <person name="Glavina T."/>
            <person name="Hammon N."/>
            <person name="Israni S."/>
            <person name="Pitluck S."/>
            <person name="Bryant D."/>
            <person name="Schmutz J."/>
            <person name="Larimer F."/>
            <person name="Land M."/>
            <person name="Kyrpides N."/>
            <person name="Ivanova N."/>
            <person name="Richardson P."/>
        </authorList>
    </citation>
    <scope>NUCLEOTIDE SEQUENCE [LARGE SCALE GENOMIC DNA]</scope>
    <source>
        <strain>DSM 273 / BCRC 81028 / 2530</strain>
    </source>
</reference>
<name>Y1643_CHLL3</name>
<organism>
    <name type="scientific">Chlorobium luteolum (strain DSM 273 / BCRC 81028 / 2530)</name>
    <name type="common">Pelodictyon luteolum</name>
    <dbReference type="NCBI Taxonomy" id="319225"/>
    <lineage>
        <taxon>Bacteria</taxon>
        <taxon>Pseudomonadati</taxon>
        <taxon>Chlorobiota</taxon>
        <taxon>Chlorobiia</taxon>
        <taxon>Chlorobiales</taxon>
        <taxon>Chlorobiaceae</taxon>
        <taxon>Chlorobium/Pelodictyon group</taxon>
        <taxon>Pelodictyon</taxon>
    </lineage>
</organism>
<gene>
    <name type="ordered locus">Plut_1643</name>
</gene>
<accession>Q3B2D4</accession>
<protein>
    <recommendedName>
        <fullName evidence="1">Probable transcriptional regulatory protein Plut_1643</fullName>
    </recommendedName>
</protein>
<sequence>MSGHSKWATIKRKKAVTDQKRGSLFTKLVKEITIAAKMGGGDPSGNPRLRLAIDTARSNSMPMDNIQRAVKKGTGELEGVIYDEITYEGYGPAGIALIIETATDNRNRTVADLRHIMSRNNGSLGESGSVSWMFQRKGSLEVPVSAASEEALMEALLEAGLEDLSNDGGETYTVITDVRDLEAAKKALEEQAIAFENAKMDLIPENYIELEAEDARKVIKLIDALEENDDVQAVYSNMEISESAMNSLED</sequence>
<evidence type="ECO:0000255" key="1">
    <source>
        <dbReference type="HAMAP-Rule" id="MF_00693"/>
    </source>
</evidence>